<accession>Q9ABY4</accession>
<evidence type="ECO:0000255" key="1">
    <source>
        <dbReference type="HAMAP-Rule" id="MF_00139"/>
    </source>
</evidence>
<evidence type="ECO:0000255" key="2">
    <source>
        <dbReference type="PROSITE-ProRule" id="PRU01202"/>
    </source>
</evidence>
<gene>
    <name evidence="1" type="primary">purH</name>
    <name type="ordered locus">CC_0086</name>
</gene>
<comment type="catalytic activity">
    <reaction evidence="1">
        <text>(6R)-10-formyltetrahydrofolate + 5-amino-1-(5-phospho-beta-D-ribosyl)imidazole-4-carboxamide = 5-formamido-1-(5-phospho-D-ribosyl)imidazole-4-carboxamide + (6S)-5,6,7,8-tetrahydrofolate</text>
        <dbReference type="Rhea" id="RHEA:22192"/>
        <dbReference type="ChEBI" id="CHEBI:57453"/>
        <dbReference type="ChEBI" id="CHEBI:58467"/>
        <dbReference type="ChEBI" id="CHEBI:58475"/>
        <dbReference type="ChEBI" id="CHEBI:195366"/>
        <dbReference type="EC" id="2.1.2.3"/>
    </reaction>
</comment>
<comment type="catalytic activity">
    <reaction evidence="1">
        <text>IMP + H2O = 5-formamido-1-(5-phospho-D-ribosyl)imidazole-4-carboxamide</text>
        <dbReference type="Rhea" id="RHEA:18445"/>
        <dbReference type="ChEBI" id="CHEBI:15377"/>
        <dbReference type="ChEBI" id="CHEBI:58053"/>
        <dbReference type="ChEBI" id="CHEBI:58467"/>
        <dbReference type="EC" id="3.5.4.10"/>
    </reaction>
</comment>
<comment type="pathway">
    <text evidence="1">Purine metabolism; IMP biosynthesis via de novo pathway; 5-formamido-1-(5-phospho-D-ribosyl)imidazole-4-carboxamide from 5-amino-1-(5-phospho-D-ribosyl)imidazole-4-carboxamide (10-formyl THF route): step 1/1.</text>
</comment>
<comment type="pathway">
    <text evidence="1">Purine metabolism; IMP biosynthesis via de novo pathway; IMP from 5-formamido-1-(5-phospho-D-ribosyl)imidazole-4-carboxamide: step 1/1.</text>
</comment>
<comment type="domain">
    <text evidence="1">The IMP cyclohydrolase activity resides in the N-terminal region.</text>
</comment>
<comment type="similarity">
    <text evidence="1">Belongs to the PurH family.</text>
</comment>
<sequence length="529" mass="55238">MPAAPDYPSAPDLVAPKRALLSVSDKTGLVDAAKILHAAGVELVSTGGTKAAIAAAGVPVKDVSDLTGFPEMMDGRVKTLHPVVHGGLLGVRDAADHAKAMADHGIGGIDILYVNLYPFEATVAKGGSYAECVENIDIGGPAMIRSAAKNHGYVAVCTDPSDLAEVLEALKAGGTTLALRQQLAARAYARTAAYDAAISAWFAEALGQDFPARKSIAGTLRQTMRYGENPHQKAAFYTFPNPRPGVATATQLQGKELSYNNINDTDAAFELIAEFDPAAGPAVAIIKHANPCGVAVGATQREAYERALACDPTSAFGGIVAVNSRLTREAAEAMVEIFTEVVIAPEADEDAIAVFAAKKNLRLLVTGGLPDALSTGDTFKSVAGGFLVQSRDDARIKASDLKIVTQRQPTEEEVRDMLFAFTVGKHVKSNAIVYARAGQTLGVGAGQMNRKDSARIAALRAADFGLDLKGCACASEAFFPFADGLIQAAEAGATAIIQPGGSMRDPEVIEAADKLGLTMAFTGVRVFRH</sequence>
<reference key="1">
    <citation type="journal article" date="2001" name="Proc. Natl. Acad. Sci. U.S.A.">
        <title>Complete genome sequence of Caulobacter crescentus.</title>
        <authorList>
            <person name="Nierman W.C."/>
            <person name="Feldblyum T.V."/>
            <person name="Laub M.T."/>
            <person name="Paulsen I.T."/>
            <person name="Nelson K.E."/>
            <person name="Eisen J.A."/>
            <person name="Heidelberg J.F."/>
            <person name="Alley M.R.K."/>
            <person name="Ohta N."/>
            <person name="Maddock J.R."/>
            <person name="Potocka I."/>
            <person name="Nelson W.C."/>
            <person name="Newton A."/>
            <person name="Stephens C."/>
            <person name="Phadke N.D."/>
            <person name="Ely B."/>
            <person name="DeBoy R.T."/>
            <person name="Dodson R.J."/>
            <person name="Durkin A.S."/>
            <person name="Gwinn M.L."/>
            <person name="Haft D.H."/>
            <person name="Kolonay J.F."/>
            <person name="Smit J."/>
            <person name="Craven M.B."/>
            <person name="Khouri H.M."/>
            <person name="Shetty J."/>
            <person name="Berry K.J."/>
            <person name="Utterback T.R."/>
            <person name="Tran K."/>
            <person name="Wolf A.M."/>
            <person name="Vamathevan J.J."/>
            <person name="Ermolaeva M.D."/>
            <person name="White O."/>
            <person name="Salzberg S.L."/>
            <person name="Venter J.C."/>
            <person name="Shapiro L."/>
            <person name="Fraser C.M."/>
        </authorList>
    </citation>
    <scope>NUCLEOTIDE SEQUENCE [LARGE SCALE GENOMIC DNA]</scope>
    <source>
        <strain>ATCC 19089 / CIP 103742 / CB 15</strain>
    </source>
</reference>
<proteinExistence type="inferred from homology"/>
<feature type="chain" id="PRO_0000192081" description="Bifunctional purine biosynthesis protein PurH">
    <location>
        <begin position="1"/>
        <end position="529"/>
    </location>
</feature>
<feature type="domain" description="MGS-like" evidence="2">
    <location>
        <begin position="8"/>
        <end position="158"/>
    </location>
</feature>
<dbReference type="EC" id="2.1.2.3" evidence="1"/>
<dbReference type="EC" id="3.5.4.10" evidence="1"/>
<dbReference type="EMBL" id="AE005673">
    <property type="protein sequence ID" value="AAK22073.1"/>
    <property type="molecule type" value="Genomic_DNA"/>
</dbReference>
<dbReference type="PIR" id="E87259">
    <property type="entry name" value="E87259"/>
</dbReference>
<dbReference type="RefSeq" id="NP_418905.1">
    <property type="nucleotide sequence ID" value="NC_002696.2"/>
</dbReference>
<dbReference type="RefSeq" id="WP_010917975.1">
    <property type="nucleotide sequence ID" value="NC_002696.2"/>
</dbReference>
<dbReference type="SMR" id="Q9ABY4"/>
<dbReference type="STRING" id="190650.CC_0086"/>
<dbReference type="EnsemblBacteria" id="AAK22073">
    <property type="protein sequence ID" value="AAK22073"/>
    <property type="gene ID" value="CC_0086"/>
</dbReference>
<dbReference type="KEGG" id="ccr:CC_0086"/>
<dbReference type="PATRIC" id="fig|190650.5.peg.83"/>
<dbReference type="eggNOG" id="COG0138">
    <property type="taxonomic scope" value="Bacteria"/>
</dbReference>
<dbReference type="HOGENOM" id="CLU_016316_5_2_5"/>
<dbReference type="BioCyc" id="CAULO:CC0086-MONOMER"/>
<dbReference type="UniPathway" id="UPA00074">
    <property type="reaction ID" value="UER00133"/>
</dbReference>
<dbReference type="UniPathway" id="UPA00074">
    <property type="reaction ID" value="UER00135"/>
</dbReference>
<dbReference type="Proteomes" id="UP000001816">
    <property type="component" value="Chromosome"/>
</dbReference>
<dbReference type="GO" id="GO:0005829">
    <property type="term" value="C:cytosol"/>
    <property type="evidence" value="ECO:0007669"/>
    <property type="project" value="TreeGrafter"/>
</dbReference>
<dbReference type="GO" id="GO:0003937">
    <property type="term" value="F:IMP cyclohydrolase activity"/>
    <property type="evidence" value="ECO:0007669"/>
    <property type="project" value="UniProtKB-UniRule"/>
</dbReference>
<dbReference type="GO" id="GO:0004643">
    <property type="term" value="F:phosphoribosylaminoimidazolecarboxamide formyltransferase activity"/>
    <property type="evidence" value="ECO:0007669"/>
    <property type="project" value="UniProtKB-UniRule"/>
</dbReference>
<dbReference type="GO" id="GO:0006189">
    <property type="term" value="P:'de novo' IMP biosynthetic process"/>
    <property type="evidence" value="ECO:0007669"/>
    <property type="project" value="UniProtKB-UniRule"/>
</dbReference>
<dbReference type="CDD" id="cd01421">
    <property type="entry name" value="IMPCH"/>
    <property type="match status" value="1"/>
</dbReference>
<dbReference type="FunFam" id="3.40.140.20:FF:000001">
    <property type="entry name" value="Bifunctional purine biosynthesis protein PurH"/>
    <property type="match status" value="1"/>
</dbReference>
<dbReference type="FunFam" id="3.40.140.20:FF:000002">
    <property type="entry name" value="Bifunctional purine biosynthesis protein PurH"/>
    <property type="match status" value="1"/>
</dbReference>
<dbReference type="FunFam" id="3.40.50.1380:FF:000001">
    <property type="entry name" value="Bifunctional purine biosynthesis protein PurH"/>
    <property type="match status" value="1"/>
</dbReference>
<dbReference type="Gene3D" id="3.40.140.20">
    <property type="match status" value="2"/>
</dbReference>
<dbReference type="Gene3D" id="3.40.50.1380">
    <property type="entry name" value="Methylglyoxal synthase-like domain"/>
    <property type="match status" value="1"/>
</dbReference>
<dbReference type="HAMAP" id="MF_00139">
    <property type="entry name" value="PurH"/>
    <property type="match status" value="1"/>
</dbReference>
<dbReference type="InterPro" id="IPR024051">
    <property type="entry name" value="AICAR_Tfase_dup_dom_sf"/>
</dbReference>
<dbReference type="InterPro" id="IPR016193">
    <property type="entry name" value="Cytidine_deaminase-like"/>
</dbReference>
<dbReference type="InterPro" id="IPR011607">
    <property type="entry name" value="MGS-like_dom"/>
</dbReference>
<dbReference type="InterPro" id="IPR036914">
    <property type="entry name" value="MGS-like_dom_sf"/>
</dbReference>
<dbReference type="InterPro" id="IPR002695">
    <property type="entry name" value="PurH-like"/>
</dbReference>
<dbReference type="NCBIfam" id="NF002049">
    <property type="entry name" value="PRK00881.1"/>
    <property type="match status" value="1"/>
</dbReference>
<dbReference type="NCBIfam" id="TIGR00355">
    <property type="entry name" value="purH"/>
    <property type="match status" value="1"/>
</dbReference>
<dbReference type="PANTHER" id="PTHR11692:SF0">
    <property type="entry name" value="BIFUNCTIONAL PURINE BIOSYNTHESIS PROTEIN ATIC"/>
    <property type="match status" value="1"/>
</dbReference>
<dbReference type="PANTHER" id="PTHR11692">
    <property type="entry name" value="BIFUNCTIONAL PURINE BIOSYNTHESIS PROTEIN PURH"/>
    <property type="match status" value="1"/>
</dbReference>
<dbReference type="Pfam" id="PF01808">
    <property type="entry name" value="AICARFT_IMPCHas"/>
    <property type="match status" value="1"/>
</dbReference>
<dbReference type="Pfam" id="PF02142">
    <property type="entry name" value="MGS"/>
    <property type="match status" value="1"/>
</dbReference>
<dbReference type="PIRSF" id="PIRSF000414">
    <property type="entry name" value="AICARFT_IMPCHas"/>
    <property type="match status" value="1"/>
</dbReference>
<dbReference type="SMART" id="SM00798">
    <property type="entry name" value="AICARFT_IMPCHas"/>
    <property type="match status" value="1"/>
</dbReference>
<dbReference type="SMART" id="SM00851">
    <property type="entry name" value="MGS"/>
    <property type="match status" value="1"/>
</dbReference>
<dbReference type="SUPFAM" id="SSF53927">
    <property type="entry name" value="Cytidine deaminase-like"/>
    <property type="match status" value="1"/>
</dbReference>
<dbReference type="SUPFAM" id="SSF52335">
    <property type="entry name" value="Methylglyoxal synthase-like"/>
    <property type="match status" value="1"/>
</dbReference>
<dbReference type="PROSITE" id="PS51855">
    <property type="entry name" value="MGS"/>
    <property type="match status" value="1"/>
</dbReference>
<organism>
    <name type="scientific">Caulobacter vibrioides (strain ATCC 19089 / CIP 103742 / CB 15)</name>
    <name type="common">Caulobacter crescentus</name>
    <dbReference type="NCBI Taxonomy" id="190650"/>
    <lineage>
        <taxon>Bacteria</taxon>
        <taxon>Pseudomonadati</taxon>
        <taxon>Pseudomonadota</taxon>
        <taxon>Alphaproteobacteria</taxon>
        <taxon>Caulobacterales</taxon>
        <taxon>Caulobacteraceae</taxon>
        <taxon>Caulobacter</taxon>
    </lineage>
</organism>
<keyword id="KW-0378">Hydrolase</keyword>
<keyword id="KW-0511">Multifunctional enzyme</keyword>
<keyword id="KW-0658">Purine biosynthesis</keyword>
<keyword id="KW-1185">Reference proteome</keyword>
<keyword id="KW-0808">Transferase</keyword>
<name>PUR9_CAUVC</name>
<protein>
    <recommendedName>
        <fullName evidence="1">Bifunctional purine biosynthesis protein PurH</fullName>
    </recommendedName>
    <domain>
        <recommendedName>
            <fullName evidence="1">Phosphoribosylaminoimidazolecarboxamide formyltransferase</fullName>
            <ecNumber evidence="1">2.1.2.3</ecNumber>
        </recommendedName>
        <alternativeName>
            <fullName evidence="1">AICAR transformylase</fullName>
        </alternativeName>
    </domain>
    <domain>
        <recommendedName>
            <fullName evidence="1">IMP cyclohydrolase</fullName>
            <ecNumber evidence="1">3.5.4.10</ecNumber>
        </recommendedName>
        <alternativeName>
            <fullName evidence="1">ATIC</fullName>
        </alternativeName>
        <alternativeName>
            <fullName evidence="1">IMP synthase</fullName>
        </alternativeName>
        <alternativeName>
            <fullName evidence="1">Inosinicase</fullName>
        </alternativeName>
    </domain>
</protein>